<proteinExistence type="inferred from homology"/>
<sequence>MKRRAASPAMSENEVDIAGSLFANHADSDDEVQVHKQQPADLDFGDLLDNGDGSDDGGDAAFIAKQQRSSNRKTGSLQSKSAKKSGGFQAMGLNSNLLRAISRKGFSVPTPIQRKTIPLVLERRDVVGMARTGSGKTAAFVIPMIERLKAHSARVGARAIIMSPSRELALQTLKVVKELGKGTDLKTVLLVGGDSLEEQFGLMAANPDIIIATPGRFLHLKVEMSLNLSSVRYVVFDEADRLFEMGFAAQLTEILHALPPSRQTLLFSATLPSSLVEFARAGLQEPSLIRLDAETKVSPDLESAFFSVKGGEKEGALLHILHDVIKMPLGVPEGIEEETDEQQARKRKRDSERRNRKEKPTEHSTIIFTATKHHVEYIAHLLRHAGFSVSYIYGSLDQTARKIQVDNFRRGRTNILVVTDVAARGIDIPVLANVINYDFPPQPKIFVHRVGRTARAGQRGWAYALLQGTSRPCGGRVRRMRTQRWRMQTRMNQPLRKTKWTSSPEKTNPPGDDEEAWEDEESESELEVTVTSSGKSYQGANILPRPRNLHVLHTIAPPAPAEERGVRAFNSGGTTQFVEAARDAAMDLANDDGAKAFGLPTRSKLRWDKRHSKYVARANDDDGSRGAKMIRGESGVKIAASFQSGRFDKWRRANRLGRLPGVGEAEKANLVRNFSGGGPGGAGAGHYKHRQEKAPKDADKFRDDYHVRKKRVAEAREKRIGKYKDGEGSRRELKSATDIRKARQVQEQKREKNARPAKRAKR</sequence>
<dbReference type="EC" id="3.6.4.13"/>
<dbReference type="EMBL" id="CH408032">
    <property type="protein sequence ID" value="EAQ88015.1"/>
    <property type="molecule type" value="Genomic_DNA"/>
</dbReference>
<dbReference type="RefSeq" id="XP_001223848.1">
    <property type="nucleotide sequence ID" value="XM_001223847.1"/>
</dbReference>
<dbReference type="SMR" id="Q2H0R2"/>
<dbReference type="FunCoup" id="Q2H0R2">
    <property type="interactions" value="934"/>
</dbReference>
<dbReference type="STRING" id="306901.Q2H0R2"/>
<dbReference type="GeneID" id="4392546"/>
<dbReference type="VEuPathDB" id="FungiDB:CHGG_04634"/>
<dbReference type="eggNOG" id="KOG0337">
    <property type="taxonomic scope" value="Eukaryota"/>
</dbReference>
<dbReference type="HOGENOM" id="CLU_003041_5_0_1"/>
<dbReference type="InParanoid" id="Q2H0R2"/>
<dbReference type="OrthoDB" id="10261375at2759"/>
<dbReference type="Proteomes" id="UP000001056">
    <property type="component" value="Unassembled WGS sequence"/>
</dbReference>
<dbReference type="GO" id="GO:0005829">
    <property type="term" value="C:cytosol"/>
    <property type="evidence" value="ECO:0007669"/>
    <property type="project" value="TreeGrafter"/>
</dbReference>
<dbReference type="GO" id="GO:0005730">
    <property type="term" value="C:nucleolus"/>
    <property type="evidence" value="ECO:0007669"/>
    <property type="project" value="UniProtKB-SubCell"/>
</dbReference>
<dbReference type="GO" id="GO:0005524">
    <property type="term" value="F:ATP binding"/>
    <property type="evidence" value="ECO:0007669"/>
    <property type="project" value="UniProtKB-KW"/>
</dbReference>
<dbReference type="GO" id="GO:0016887">
    <property type="term" value="F:ATP hydrolysis activity"/>
    <property type="evidence" value="ECO:0007669"/>
    <property type="project" value="RHEA"/>
</dbReference>
<dbReference type="GO" id="GO:0003723">
    <property type="term" value="F:RNA binding"/>
    <property type="evidence" value="ECO:0007669"/>
    <property type="project" value="UniProtKB-KW"/>
</dbReference>
<dbReference type="GO" id="GO:0003724">
    <property type="term" value="F:RNA helicase activity"/>
    <property type="evidence" value="ECO:0007669"/>
    <property type="project" value="UniProtKB-EC"/>
</dbReference>
<dbReference type="GO" id="GO:0006364">
    <property type="term" value="P:rRNA processing"/>
    <property type="evidence" value="ECO:0007669"/>
    <property type="project" value="UniProtKB-KW"/>
</dbReference>
<dbReference type="CDD" id="cd17959">
    <property type="entry name" value="DEADc_DDX54"/>
    <property type="match status" value="1"/>
</dbReference>
<dbReference type="CDD" id="cd18787">
    <property type="entry name" value="SF2_C_DEAD"/>
    <property type="match status" value="1"/>
</dbReference>
<dbReference type="FunFam" id="3.40.50.300:FF:000865">
    <property type="entry name" value="ATP-dependent RNA helicase DDX54"/>
    <property type="match status" value="1"/>
</dbReference>
<dbReference type="Gene3D" id="3.40.50.300">
    <property type="entry name" value="P-loop containing nucleotide triphosphate hydrolases"/>
    <property type="match status" value="2"/>
</dbReference>
<dbReference type="InterPro" id="IPR012541">
    <property type="entry name" value="DBP10_C"/>
</dbReference>
<dbReference type="InterPro" id="IPR033517">
    <property type="entry name" value="DDX54/DBP10_DEAD-box_helicase"/>
</dbReference>
<dbReference type="InterPro" id="IPR011545">
    <property type="entry name" value="DEAD/DEAH_box_helicase_dom"/>
</dbReference>
<dbReference type="InterPro" id="IPR050079">
    <property type="entry name" value="DEAD_box_RNA_helicase"/>
</dbReference>
<dbReference type="InterPro" id="IPR014001">
    <property type="entry name" value="Helicase_ATP-bd"/>
</dbReference>
<dbReference type="InterPro" id="IPR001650">
    <property type="entry name" value="Helicase_C-like"/>
</dbReference>
<dbReference type="InterPro" id="IPR027417">
    <property type="entry name" value="P-loop_NTPase"/>
</dbReference>
<dbReference type="InterPro" id="IPR000629">
    <property type="entry name" value="RNA-helicase_DEAD-box_CS"/>
</dbReference>
<dbReference type="InterPro" id="IPR014014">
    <property type="entry name" value="RNA_helicase_DEAD_Q_motif"/>
</dbReference>
<dbReference type="PANTHER" id="PTHR47959">
    <property type="entry name" value="ATP-DEPENDENT RNA HELICASE RHLE-RELATED"/>
    <property type="match status" value="1"/>
</dbReference>
<dbReference type="PANTHER" id="PTHR47959:SF8">
    <property type="entry name" value="RNA HELICASE"/>
    <property type="match status" value="1"/>
</dbReference>
<dbReference type="Pfam" id="PF08147">
    <property type="entry name" value="DBP10CT"/>
    <property type="match status" value="1"/>
</dbReference>
<dbReference type="Pfam" id="PF00270">
    <property type="entry name" value="DEAD"/>
    <property type="match status" value="1"/>
</dbReference>
<dbReference type="Pfam" id="PF00271">
    <property type="entry name" value="Helicase_C"/>
    <property type="match status" value="1"/>
</dbReference>
<dbReference type="SMART" id="SM01123">
    <property type="entry name" value="DBP10CT"/>
    <property type="match status" value="1"/>
</dbReference>
<dbReference type="SMART" id="SM00487">
    <property type="entry name" value="DEXDc"/>
    <property type="match status" value="1"/>
</dbReference>
<dbReference type="SMART" id="SM00490">
    <property type="entry name" value="HELICc"/>
    <property type="match status" value="1"/>
</dbReference>
<dbReference type="SUPFAM" id="SSF52540">
    <property type="entry name" value="P-loop containing nucleoside triphosphate hydrolases"/>
    <property type="match status" value="2"/>
</dbReference>
<dbReference type="PROSITE" id="PS00039">
    <property type="entry name" value="DEAD_ATP_HELICASE"/>
    <property type="match status" value="1"/>
</dbReference>
<dbReference type="PROSITE" id="PS51192">
    <property type="entry name" value="HELICASE_ATP_BIND_1"/>
    <property type="match status" value="1"/>
</dbReference>
<dbReference type="PROSITE" id="PS51194">
    <property type="entry name" value="HELICASE_CTER"/>
    <property type="match status" value="1"/>
</dbReference>
<dbReference type="PROSITE" id="PS51195">
    <property type="entry name" value="Q_MOTIF"/>
    <property type="match status" value="1"/>
</dbReference>
<protein>
    <recommendedName>
        <fullName>ATP-dependent RNA helicase DBP10</fullName>
        <ecNumber>3.6.4.13</ecNumber>
    </recommendedName>
</protein>
<feature type="chain" id="PRO_0000256044" description="ATP-dependent RNA helicase DBP10">
    <location>
        <begin position="1"/>
        <end position="762"/>
    </location>
</feature>
<feature type="domain" description="Helicase ATP-binding" evidence="2">
    <location>
        <begin position="117"/>
        <end position="289"/>
    </location>
</feature>
<feature type="domain" description="Helicase C-terminal" evidence="3">
    <location>
        <begin position="334"/>
        <end position="511"/>
    </location>
</feature>
<feature type="region of interest" description="Disordered" evidence="4">
    <location>
        <begin position="20"/>
        <end position="50"/>
    </location>
</feature>
<feature type="region of interest" description="Disordered" evidence="4">
    <location>
        <begin position="65"/>
        <end position="88"/>
    </location>
</feature>
<feature type="region of interest" description="Disordered" evidence="4">
    <location>
        <begin position="333"/>
        <end position="363"/>
    </location>
</feature>
<feature type="region of interest" description="Disordered" evidence="4">
    <location>
        <begin position="491"/>
        <end position="523"/>
    </location>
</feature>
<feature type="region of interest" description="Disordered" evidence="4">
    <location>
        <begin position="671"/>
        <end position="762"/>
    </location>
</feature>
<feature type="short sequence motif" description="Q motif">
    <location>
        <begin position="86"/>
        <end position="114"/>
    </location>
</feature>
<feature type="short sequence motif" description="DEAD box">
    <location>
        <begin position="237"/>
        <end position="240"/>
    </location>
</feature>
<feature type="compositionally biased region" description="Low complexity" evidence="4">
    <location>
        <begin position="41"/>
        <end position="50"/>
    </location>
</feature>
<feature type="compositionally biased region" description="Polar residues" evidence="4">
    <location>
        <begin position="66"/>
        <end position="80"/>
    </location>
</feature>
<feature type="compositionally biased region" description="Basic and acidic residues" evidence="4">
    <location>
        <begin position="349"/>
        <end position="362"/>
    </location>
</feature>
<feature type="compositionally biased region" description="Acidic residues" evidence="4">
    <location>
        <begin position="511"/>
        <end position="523"/>
    </location>
</feature>
<feature type="compositionally biased region" description="Gly residues" evidence="4">
    <location>
        <begin position="675"/>
        <end position="684"/>
    </location>
</feature>
<feature type="compositionally biased region" description="Basic and acidic residues" evidence="4">
    <location>
        <begin position="692"/>
        <end position="754"/>
    </location>
</feature>
<feature type="binding site" evidence="2">
    <location>
        <begin position="130"/>
        <end position="137"/>
    </location>
    <ligand>
        <name>ATP</name>
        <dbReference type="ChEBI" id="CHEBI:30616"/>
    </ligand>
</feature>
<name>DBP10_CHAGB</name>
<comment type="function">
    <text evidence="1">ATP-binding RNA helicase involved in the biogenesis of 60S ribosomal subunits and is required for the normal formation of 25S and 5.8S rRNAs.</text>
</comment>
<comment type="catalytic activity">
    <reaction>
        <text>ATP + H2O = ADP + phosphate + H(+)</text>
        <dbReference type="Rhea" id="RHEA:13065"/>
        <dbReference type="ChEBI" id="CHEBI:15377"/>
        <dbReference type="ChEBI" id="CHEBI:15378"/>
        <dbReference type="ChEBI" id="CHEBI:30616"/>
        <dbReference type="ChEBI" id="CHEBI:43474"/>
        <dbReference type="ChEBI" id="CHEBI:456216"/>
        <dbReference type="EC" id="3.6.4.13"/>
    </reaction>
</comment>
<comment type="subcellular location">
    <subcellularLocation>
        <location evidence="1">Nucleus</location>
        <location evidence="1">Nucleolus</location>
    </subcellularLocation>
</comment>
<comment type="domain">
    <text>The Q motif is unique to and characteristic of the DEAD box family of RNA helicases and controls ATP binding and hydrolysis.</text>
</comment>
<comment type="similarity">
    <text evidence="5">Belongs to the DEAD box helicase family. DDX54/DBP10 subfamily.</text>
</comment>
<keyword id="KW-0067">ATP-binding</keyword>
<keyword id="KW-0347">Helicase</keyword>
<keyword id="KW-0378">Hydrolase</keyword>
<keyword id="KW-0547">Nucleotide-binding</keyword>
<keyword id="KW-0539">Nucleus</keyword>
<keyword id="KW-1185">Reference proteome</keyword>
<keyword id="KW-0690">Ribosome biogenesis</keyword>
<keyword id="KW-0694">RNA-binding</keyword>
<keyword id="KW-0698">rRNA processing</keyword>
<evidence type="ECO:0000250" key="1"/>
<evidence type="ECO:0000255" key="2">
    <source>
        <dbReference type="PROSITE-ProRule" id="PRU00541"/>
    </source>
</evidence>
<evidence type="ECO:0000255" key="3">
    <source>
        <dbReference type="PROSITE-ProRule" id="PRU00542"/>
    </source>
</evidence>
<evidence type="ECO:0000256" key="4">
    <source>
        <dbReference type="SAM" id="MobiDB-lite"/>
    </source>
</evidence>
<evidence type="ECO:0000305" key="5"/>
<accession>Q2H0R2</accession>
<reference key="1">
    <citation type="journal article" date="2015" name="Genome Announc.">
        <title>Draft genome sequence of the cellulolytic fungus Chaetomium globosum.</title>
        <authorList>
            <person name="Cuomo C.A."/>
            <person name="Untereiner W.A."/>
            <person name="Ma L.-J."/>
            <person name="Grabherr M."/>
            <person name="Birren B.W."/>
        </authorList>
    </citation>
    <scope>NUCLEOTIDE SEQUENCE [LARGE SCALE GENOMIC DNA]</scope>
    <source>
        <strain>ATCC 6205 / CBS 148.51 / DSM 1962 / NBRC 6347 / NRRL 1970</strain>
    </source>
</reference>
<organism>
    <name type="scientific">Chaetomium globosum (strain ATCC 6205 / CBS 148.51 / DSM 1962 / NBRC 6347 / NRRL 1970)</name>
    <name type="common">Soil fungus</name>
    <dbReference type="NCBI Taxonomy" id="306901"/>
    <lineage>
        <taxon>Eukaryota</taxon>
        <taxon>Fungi</taxon>
        <taxon>Dikarya</taxon>
        <taxon>Ascomycota</taxon>
        <taxon>Pezizomycotina</taxon>
        <taxon>Sordariomycetes</taxon>
        <taxon>Sordariomycetidae</taxon>
        <taxon>Sordariales</taxon>
        <taxon>Chaetomiaceae</taxon>
        <taxon>Chaetomium</taxon>
    </lineage>
</organism>
<gene>
    <name type="primary">DBP10</name>
    <name type="ORF">CHGG_04634</name>
</gene>